<proteinExistence type="inferred from homology"/>
<dbReference type="EMBL" id="CP000449">
    <property type="protein sequence ID" value="ABI66076.1"/>
    <property type="molecule type" value="Genomic_DNA"/>
</dbReference>
<dbReference type="RefSeq" id="WP_011643722.1">
    <property type="nucleotide sequence ID" value="NC_008347.1"/>
</dbReference>
<dbReference type="SMR" id="Q0ANR1"/>
<dbReference type="STRING" id="394221.Mmar10_1784"/>
<dbReference type="KEGG" id="mmr:Mmar10_1784"/>
<dbReference type="eggNOG" id="COG0198">
    <property type="taxonomic scope" value="Bacteria"/>
</dbReference>
<dbReference type="HOGENOM" id="CLU_093315_2_2_5"/>
<dbReference type="OrthoDB" id="9807419at2"/>
<dbReference type="Proteomes" id="UP000001964">
    <property type="component" value="Chromosome"/>
</dbReference>
<dbReference type="GO" id="GO:1990904">
    <property type="term" value="C:ribonucleoprotein complex"/>
    <property type="evidence" value="ECO:0007669"/>
    <property type="project" value="UniProtKB-KW"/>
</dbReference>
<dbReference type="GO" id="GO:0005840">
    <property type="term" value="C:ribosome"/>
    <property type="evidence" value="ECO:0007669"/>
    <property type="project" value="UniProtKB-KW"/>
</dbReference>
<dbReference type="GO" id="GO:0019843">
    <property type="term" value="F:rRNA binding"/>
    <property type="evidence" value="ECO:0007669"/>
    <property type="project" value="UniProtKB-UniRule"/>
</dbReference>
<dbReference type="GO" id="GO:0003735">
    <property type="term" value="F:structural constituent of ribosome"/>
    <property type="evidence" value="ECO:0007669"/>
    <property type="project" value="InterPro"/>
</dbReference>
<dbReference type="GO" id="GO:0006412">
    <property type="term" value="P:translation"/>
    <property type="evidence" value="ECO:0007669"/>
    <property type="project" value="UniProtKB-UniRule"/>
</dbReference>
<dbReference type="CDD" id="cd06089">
    <property type="entry name" value="KOW_RPL26"/>
    <property type="match status" value="1"/>
</dbReference>
<dbReference type="FunFam" id="2.30.30.30:FF:000004">
    <property type="entry name" value="50S ribosomal protein L24"/>
    <property type="match status" value="1"/>
</dbReference>
<dbReference type="Gene3D" id="2.30.30.30">
    <property type="match status" value="1"/>
</dbReference>
<dbReference type="HAMAP" id="MF_01326_B">
    <property type="entry name" value="Ribosomal_uL24_B"/>
    <property type="match status" value="1"/>
</dbReference>
<dbReference type="InterPro" id="IPR005824">
    <property type="entry name" value="KOW"/>
</dbReference>
<dbReference type="InterPro" id="IPR014722">
    <property type="entry name" value="Rib_uL2_dom2"/>
</dbReference>
<dbReference type="InterPro" id="IPR003256">
    <property type="entry name" value="Ribosomal_uL24"/>
</dbReference>
<dbReference type="InterPro" id="IPR005825">
    <property type="entry name" value="Ribosomal_uL24_CS"/>
</dbReference>
<dbReference type="InterPro" id="IPR041988">
    <property type="entry name" value="Ribosomal_uL24_KOW"/>
</dbReference>
<dbReference type="InterPro" id="IPR008991">
    <property type="entry name" value="Translation_prot_SH3-like_sf"/>
</dbReference>
<dbReference type="NCBIfam" id="TIGR01079">
    <property type="entry name" value="rplX_bact"/>
    <property type="match status" value="1"/>
</dbReference>
<dbReference type="PANTHER" id="PTHR12903">
    <property type="entry name" value="MITOCHONDRIAL RIBOSOMAL PROTEIN L24"/>
    <property type="match status" value="1"/>
</dbReference>
<dbReference type="Pfam" id="PF00467">
    <property type="entry name" value="KOW"/>
    <property type="match status" value="1"/>
</dbReference>
<dbReference type="Pfam" id="PF17136">
    <property type="entry name" value="ribosomal_L24"/>
    <property type="match status" value="1"/>
</dbReference>
<dbReference type="SMART" id="SM00739">
    <property type="entry name" value="KOW"/>
    <property type="match status" value="1"/>
</dbReference>
<dbReference type="SUPFAM" id="SSF50104">
    <property type="entry name" value="Translation proteins SH3-like domain"/>
    <property type="match status" value="1"/>
</dbReference>
<dbReference type="PROSITE" id="PS01108">
    <property type="entry name" value="RIBOSOMAL_L24"/>
    <property type="match status" value="1"/>
</dbReference>
<sequence>MAAKIKKGDKVVILAGRDKGKTGEVTKVLPTEDRVVVAGVNVVKRHTRATQTEQGGIIEKEASIHVSNVAVADPKTGEATRVGFKTEDGKKVRVAKSSGEVIDV</sequence>
<accession>Q0ANR1</accession>
<keyword id="KW-1185">Reference proteome</keyword>
<keyword id="KW-0687">Ribonucleoprotein</keyword>
<keyword id="KW-0689">Ribosomal protein</keyword>
<keyword id="KW-0694">RNA-binding</keyword>
<keyword id="KW-0699">rRNA-binding</keyword>
<name>RL24_MARMM</name>
<comment type="function">
    <text evidence="1">One of two assembly initiator proteins, it binds directly to the 5'-end of the 23S rRNA, where it nucleates assembly of the 50S subunit.</text>
</comment>
<comment type="function">
    <text evidence="1">One of the proteins that surrounds the polypeptide exit tunnel on the outside of the subunit.</text>
</comment>
<comment type="subunit">
    <text evidence="1">Part of the 50S ribosomal subunit.</text>
</comment>
<comment type="similarity">
    <text evidence="1">Belongs to the universal ribosomal protein uL24 family.</text>
</comment>
<evidence type="ECO:0000255" key="1">
    <source>
        <dbReference type="HAMAP-Rule" id="MF_01326"/>
    </source>
</evidence>
<evidence type="ECO:0000305" key="2"/>
<reference key="1">
    <citation type="submission" date="2006-08" db="EMBL/GenBank/DDBJ databases">
        <title>Complete sequence of Maricaulis maris MCS10.</title>
        <authorList>
            <consortium name="US DOE Joint Genome Institute"/>
            <person name="Copeland A."/>
            <person name="Lucas S."/>
            <person name="Lapidus A."/>
            <person name="Barry K."/>
            <person name="Detter J.C."/>
            <person name="Glavina del Rio T."/>
            <person name="Hammon N."/>
            <person name="Israni S."/>
            <person name="Dalin E."/>
            <person name="Tice H."/>
            <person name="Pitluck S."/>
            <person name="Saunders E."/>
            <person name="Brettin T."/>
            <person name="Bruce D."/>
            <person name="Han C."/>
            <person name="Tapia R."/>
            <person name="Gilna P."/>
            <person name="Schmutz J."/>
            <person name="Larimer F."/>
            <person name="Land M."/>
            <person name="Hauser L."/>
            <person name="Kyrpides N."/>
            <person name="Mikhailova N."/>
            <person name="Viollier P."/>
            <person name="Stephens C."/>
            <person name="Richardson P."/>
        </authorList>
    </citation>
    <scope>NUCLEOTIDE SEQUENCE [LARGE SCALE GENOMIC DNA]</scope>
    <source>
        <strain>MCS10</strain>
    </source>
</reference>
<feature type="chain" id="PRO_1000052244" description="Large ribosomal subunit protein uL24">
    <location>
        <begin position="1"/>
        <end position="104"/>
    </location>
</feature>
<organism>
    <name type="scientific">Maricaulis maris (strain MCS10)</name>
    <name type="common">Caulobacter maris</name>
    <dbReference type="NCBI Taxonomy" id="394221"/>
    <lineage>
        <taxon>Bacteria</taxon>
        <taxon>Pseudomonadati</taxon>
        <taxon>Pseudomonadota</taxon>
        <taxon>Alphaproteobacteria</taxon>
        <taxon>Maricaulales</taxon>
        <taxon>Maricaulaceae</taxon>
        <taxon>Maricaulis</taxon>
    </lineage>
</organism>
<protein>
    <recommendedName>
        <fullName evidence="1">Large ribosomal subunit protein uL24</fullName>
    </recommendedName>
    <alternativeName>
        <fullName evidence="2">50S ribosomal protein L24</fullName>
    </alternativeName>
</protein>
<gene>
    <name evidence="1" type="primary">rplX</name>
    <name type="ordered locus">Mmar10_1784</name>
</gene>